<protein>
    <recommendedName>
        <fullName evidence="14">Metallo-beta-lactamase IMP-1</fullName>
        <ecNumber evidence="11">3.1.26.-</ecNumber>
        <ecNumber evidence="2 4 5 12">3.5.2.6</ecNumber>
    </recommendedName>
    <alternativeName>
        <fullName evidence="14">B2 metallo-beta-lactamase</fullName>
    </alternativeName>
    <alternativeName>
        <fullName evidence="13">BLA-IMP</fullName>
        <shortName evidence="13">IMP-1</shortName>
    </alternativeName>
    <alternativeName>
        <fullName evidence="13">Beta-lactamase type II</fullName>
    </alternativeName>
    <alternativeName>
        <fullName evidence="13">Metallo-beta-lactamase type II</fullName>
    </alternativeName>
</protein>
<comment type="function">
    <text evidence="2 4 5 9 11 12">Class B beta-lactamase which confers resistance to the beta-lactam antibiotics, including penicillins, cephalosporins and carbapenems (PubMed:10898670, PubMed:29485857, PubMed:8141584). Acts via hydrolysis of the beta-lactam ring (PubMed:10898670, PubMed:15788415). Has penicillin-, cephalosporin- and carbapenem-hydrolyzing activities (PubMed:10898670, PubMed:15788415, PubMed:15892033). Has endoribonuclease activity, cleaving substrate RNAs preferentially between U/C and A, in vitro (PubMed:33126240).</text>
</comment>
<comment type="catalytic activity">
    <reaction evidence="2 4 5 12">
        <text>a beta-lactam + H2O = a substituted beta-amino acid</text>
        <dbReference type="Rhea" id="RHEA:20401"/>
        <dbReference type="ChEBI" id="CHEBI:15377"/>
        <dbReference type="ChEBI" id="CHEBI:35627"/>
        <dbReference type="ChEBI" id="CHEBI:140347"/>
        <dbReference type="EC" id="3.5.2.6"/>
    </reaction>
</comment>
<comment type="cofactor">
    <cofactor evidence="7">
        <name>Zn(2+)</name>
        <dbReference type="ChEBI" id="CHEBI:29105"/>
    </cofactor>
    <text evidence="7">Binds 2 Zn(2+) ions per subunit.</text>
</comment>
<comment type="activity regulation">
    <text evidence="5 6 7 8 9 10 12">Inhibited by captopril stereoisomers, Hg(2+), Fe(2+), Cu(2+), chelating agents such as EDTA, dansyl derivatives, including dansyl-C4SH, bisthiazolidines, mercaptoacetic acid and by PMPC phosphonates (PubMed:16937423, PubMed:26482303, PubMed:27303030, PubMed:29485857, PubMed:31405855, PubMed:8141584). Inhibited by 3-(3-mercaptopropionylsulfanyl)-propionic acid pentafluorophenyl ester, via a covalent binding to Lys-179 (PubMed:15892033). Not susceptible to inactivation by the beta-lactamase-blocking agents clavulanic acid or cloxacillin (PubMed:8141584).</text>
</comment>
<comment type="biophysicochemical properties">
    <kinetics>
        <KM evidence="12">0.74 uM for meropenem (at pH 7.0 and 30 degrees Celsius)</KM>
        <KM evidence="12">1.24 uM for ceftazidime (at pH 7.0 and 30 degrees Celsius)</KM>
        <KM evidence="2">46 uM for ceftazidime (at pH 7.0 and 30 degrees Celsius)</KM>
        <KM evidence="12">2.07 uM for ceftizoxime and panipenem (at pH 7.0 and 30 degrees Celsius)</KM>
        <KM evidence="12">2.13 uM for cefoperazone (at pH 7.0 and 30 degrees Celsius)</KM>
        <KM evidence="4">800 uM for benzylpenicillin (at pH 7.4 and 30 degrees Celsius)</KM>
        <KM evidence="2">241 uM for benzylpenicillin (at pH 7.0 and 30 degrees Celsius)</KM>
        <KM evidence="12">2.15 uM for ampicillin (at pH 7.0 and 30 degrees Celsius)</KM>
        <KM evidence="2">140 uM for ampicillin (at pH 7.0 and 30 degrees Celsius)</KM>
        <KM evidence="4">20 uM for nitrocefin (at pH 7.4 and 30 degrees Celsius)</KM>
        <KM evidence="12">3.97 uM for aztreonam (at pH 7.0 and 30 degrees Celsius)</KM>
        <KM evidence="12">7.33 uM for imipenem (at pH 7.0 and 30 degrees Celsius)</KM>
        <KM evidence="4">45 uM for imipenem (at pH 7.4 and 30 degrees Celsius)</KM>
        <KM evidence="2">30 uM for imipenem (at pH 7.0 and 30 degrees Celsius)</KM>
        <KM evidence="12">7.55 uM for moxalactam (at pH 7.0 and 30 degrees Celsius)</KM>
        <KM evidence="12">7.74 uM for cephaloridine (at pH 7.0 and 30 degrees Celsius)</KM>
        <KM evidence="2">7.2 uM for cephaloridine (at pH 7.0 and 30 degrees Celsius)</KM>
        <KM evidence="4">8 uM for cephaloridine (at pH 7.4 and 30 degrees Celsius)</KM>
        <KM evidence="2">2 uM for cefalotin (at pH 7.0 and 30 degrees Celsius)</KM>
        <KM evidence="2">1.4 uM for cefotaxime (at pH 7.0 and 30 degrees Celsius)</KM>
        <text evidence="2 4">kcat is 123 sec(-1) with imipenem as substrate (at pH 7.4 and 30 degrees Celsius) (PubMed:15788415). kcat is 127 sec(-1) with imipenem as substrate (at pH 7.0 and 30 degrees Celsius) (PubMed:10898670). kcat is 162 sec(-1) with ampicillin as substrate (at pH 7.0 and 30 degrees Celsius) (PubMed:10898670). kcat is 90 sec(-1) with cephaloridine as substrate (at pH 7.4 and 30 degrees Celsius) (PubMed:15788415). kcat is 466 sec(-1) with nitrocefin as substrate (at pH 7.4 and 30 degrees Celsius) (PubMed:15788415). kcat is 650 sec(-1) with benzylpenicillin as substrate (at pH 7.4 and 30 degrees Celsius) (PubMed:15788415). kcat is 461 sec(-1) with benzylpenicillin as substrate (at pH 7.0 and 30 degrees Celsius) (PubMed:10898670). kcat is 16.3 sec(-1) with ceftazidime as substrate (at pH 7.0 and 30 degrees Celsius) (PubMed:10898670). kcat is 22.5 sec(-1) with cefotaxime as substrate (at pH 7.0 and 30 degrees Celsius) (PubMed:10898670). kcat is 65 sec(-1) with cefalotin as substrate (at pH 7.0 and 30 degrees Celsius) (PubMed:10898670). kcat is 62 sec(-1) with cephaloridine as substrate (at pH 7.0 and 30 degrees Celsius) (PubMed:10898670).</text>
    </kinetics>
</comment>
<comment type="subunit">
    <text evidence="1">Monomer.</text>
</comment>
<comment type="subcellular location">
    <subcellularLocation>
        <location evidence="14">Periplasm</location>
    </subcellularLocation>
</comment>
<comment type="miscellaneous">
    <text evidence="3">The class B beta-lactamase family has a specific amino-acid numbering system known as BBL, for standard numbering of class B beta-lactamases. A multiple sequence alignment was used to derive a consensus sequence and then the consensus was numbered taking into account insertions and deletions. This allows use of identical numbers, e.g. for active site residues, despite differences in protein length. UniProt always uses natural numbering of residues, hence there appear to be differences in numbering between this entry and some papers.</text>
</comment>
<comment type="similarity">
    <text evidence="14">Belongs to the metallo-beta-lactamase superfamily. Class-B beta-lactamase family.</text>
</comment>
<keyword id="KW-0002">3D-structure</keyword>
<keyword id="KW-0046">Antibiotic resistance</keyword>
<keyword id="KW-0903">Direct protein sequencing</keyword>
<keyword id="KW-0378">Hydrolase</keyword>
<keyword id="KW-0479">Metal-binding</keyword>
<keyword id="KW-0574">Periplasm</keyword>
<keyword id="KW-0732">Signal</keyword>
<keyword id="KW-0862">Zinc</keyword>
<reference key="1">
    <citation type="journal article" date="1994" name="Antimicrob. Agents Chemother.">
        <title>Molecular characterization of an enterobacterial metallo beta-lactamase found in a clinical isolate of Serratia marcescens that shows imipenem resistance.</title>
        <authorList>
            <person name="Osano E."/>
            <person name="Arakawa Y."/>
            <person name="Wacharotayankun R."/>
            <person name="Ohta M."/>
            <person name="Horii T."/>
            <person name="Ito H."/>
            <person name="Yoshimura F."/>
            <person name="Kato N."/>
        </authorList>
    </citation>
    <scope>NUCLEOTIDE SEQUENCE [GENOMIC DNA]</scope>
    <scope>PROTEIN SEQUENCE OF 19-42</scope>
    <scope>FUNCTION</scope>
    <scope>CATALYTIC ACTIVITY</scope>
    <scope>BIOPHYSICOCHEMICAL PROPERTIES</scope>
    <scope>ACTIVITY REGULATION</scope>
    <scope>SUBSTRATE SPECIFICITY</scope>
    <source>
        <strain>AK9373 / TN9106</strain>
    </source>
</reference>
<reference key="2">
    <citation type="journal article" date="2000" name="Antimicrob. Agents Chemother.">
        <title>Amino acid substitutions in a variant of IMP-1 metallo-beta-lactamase.</title>
        <authorList>
            <person name="Iyobe S."/>
            <person name="Kusadokoro H."/>
            <person name="Ozaki J."/>
            <person name="Matsumura N."/>
            <person name="Minami S."/>
            <person name="Haruta S."/>
            <person name="Sawai T."/>
            <person name="O'Hara K."/>
        </authorList>
    </citation>
    <scope>FUNCTION</scope>
    <scope>CATALYTIC ACTIVITY</scope>
    <scope>BIOPHYSICOCHEMICAL PROPERTIES</scope>
    <scope>MUTAGENESIS OF GLU-105 AND SER-214</scope>
</reference>
<reference key="3">
    <citation type="journal article" date="2001" name="Antimicrob. Agents Chemother.">
        <title>Standard numbering scheme for class B beta-lactamases.</title>
        <authorList>
            <consortium name="Metallo-beta-lactamases Working Group"/>
            <person name="Galleni M."/>
            <person name="Lamotte-Brasseur J."/>
            <person name="Rossolini G.M."/>
            <person name="Spencer J."/>
            <person name="Dideberg O."/>
            <person name="Frere J.M."/>
        </authorList>
    </citation>
    <scope>AMINO ACID NUMBERING SCHEME</scope>
</reference>
<reference key="4">
    <citation type="journal article" date="2020" name="PLoS ONE">
        <title>RNA-hydrolyzing activity of metallo-beta-lactamase IMP-1.</title>
        <authorList>
            <person name="Kato Y."/>
            <person name="Takahashi M."/>
            <person name="Seki M."/>
            <person name="Nashimoto M."/>
            <person name="Shimizu-Ibuka A."/>
        </authorList>
    </citation>
    <scope>FUNCTION</scope>
    <scope>CATALYTIC ACTIVITY</scope>
</reference>
<reference evidence="15" key="5">
    <citation type="journal article" date="2005" name="Angew. Chem. Int. Ed.">
        <title>Irreversible inhibition of metallo-beta-lactamase (IMP-1) by 3-(3-mercaptopropionylsulfanyl)propionic acid pentafluorophenyl ester.</title>
        <authorList>
            <person name="Kurosaki H."/>
            <person name="Yamaguchi Y."/>
            <person name="Higashi T."/>
            <person name="Soga K."/>
            <person name="Matsueda S."/>
            <person name="Yumoto H."/>
            <person name="Misumi S."/>
            <person name="Yamagata Y."/>
            <person name="Arakawa Y."/>
            <person name="Goto M."/>
        </authorList>
    </citation>
    <scope>X-RAY CRYSTALLOGRAPHY (2.63 ANGSTROMS) OF 19-246 IN COMPLEX WITH ZN(2+) AND INHIBITOR</scope>
    <scope>FUNCTION</scope>
    <scope>CATALYTIC ACTIVITY</scope>
    <scope>ACTIVITY REGULATION</scope>
</reference>
<reference evidence="16 17" key="6">
    <citation type="journal article" date="2005" name="J. Biol. Chem.">
        <title>Probing the role of Asp-120(81) of metallo-beta-lactamase (IMP-1) by site-directed mutagenesis, kinetic studies, and X-ray crystallography.</title>
        <authorList>
            <person name="Yamaguchi Y."/>
            <person name="Kuroki T."/>
            <person name="Yasuzawa H."/>
            <person name="Higashi T."/>
            <person name="Jin W."/>
            <person name="Kawanami A."/>
            <person name="Yamagata Y."/>
            <person name="Arakawa Y."/>
            <person name="Goto M."/>
            <person name="Kurosaki H."/>
        </authorList>
    </citation>
    <scope>X-RAY CRYSTALLOGRAPHY (2.01 ANGSTROMS) OF 19-246 OF MUTANTS ALA-99 AND GLU-99 IN COMPLEXES WITH ZN(2+)</scope>
    <scope>FUNCTION</scope>
    <scope>CATALYTIC ACTIVITY</scope>
    <scope>BIOPHYSICOCHEMICAL PROPERTIES</scope>
    <scope>MUTAGENESIS OF ASP-99</scope>
</reference>
<reference evidence="18" key="7">
    <citation type="journal article" date="2006" name="ChemMedChem">
        <title>Probing, inhibition, and crystallographic characterization of metallo-beta-lactamase (IMP-1) with fluorescent agents containing dansyl and thiol groups.</title>
        <authorList>
            <person name="Kurosaki H."/>
            <person name="Yamaguchi Y."/>
            <person name="Yasuzawa H."/>
            <person name="Jin W."/>
            <person name="Yamagata Y."/>
            <person name="Arakawa Y."/>
        </authorList>
    </citation>
    <scope>X-RAY CRYSTALLOGRAPHY (2.43 ANGSTROMS) OF 19-246 IN COMPLEX WITH DANSYL INHIBITOR AND ZN(2+)</scope>
    <scope>ACTIVITY REGULATION</scope>
</reference>
<reference key="8">
    <citation type="journal article" date="2015" name="Antimicrob. Agents Chemother.">
        <title>Structural basis of metallo-beta-lactamase inhibition by captopril stereoisomers.</title>
        <authorList>
            <person name="Brem J."/>
            <person name="van Berkel S.S."/>
            <person name="Zollman D."/>
            <person name="Lee S.Y."/>
            <person name="Gileadi O."/>
            <person name="McHugh P.J."/>
            <person name="Walsh T.R."/>
            <person name="McDonough M.A."/>
            <person name="Schofield C.J."/>
        </authorList>
    </citation>
    <scope>X-RAY CRYSTALLOGRAPHY (1.71 ANGSTROMS) OF 19-246 IN COMPLEX WITH SUBSTRATE ANALOG AND ZINC IONS</scope>
    <scope>ACTIVITY REGULATION</scope>
    <scope>COFACTOR</scope>
</reference>
<reference evidence="19 20 21" key="9">
    <citation type="journal article" date="2016" name="Proc. Natl. Acad. Sci. U.S.A.">
        <title>Cross-class metallo-beta-lactamase inhibition by bisthiazolidines reveals multiple binding modes.</title>
        <authorList>
            <person name="Hinchliffe P."/>
            <person name="Gonzalez M.M."/>
            <person name="Mojica M.F."/>
            <person name="Gonzalez J.M."/>
            <person name="Castillo V."/>
            <person name="Saiz C."/>
            <person name="Kosmopoulou M."/>
            <person name="Tooke C.L."/>
            <person name="Llarrull L.I."/>
            <person name="Mahler G."/>
            <person name="Bonomo R.A."/>
            <person name="Vila A.J."/>
            <person name="Spencer J."/>
        </authorList>
    </citation>
    <scope>X-RAY CRYSTALLOGRAPHY (1.98 ANGSTROMS) OF 19-246 IN APO FORM AND IN COMPLEXES WITH SUBSTRATE ANALOG INHIBITORS AND ZN(2+)</scope>
    <scope>ACTIVITY REGULATION</scope>
</reference>
<reference evidence="22" key="10">
    <citation type="journal article" date="2018" name="Biochemistry">
        <title>Structural and Kinetic Studies of the Potent Inhibition of Metallo-beta-lactamases by 6-Phosphonomethylpyridine-2-carboxylates.</title>
        <authorList>
            <person name="Hinchliffe P."/>
            <person name="Tanner C.A."/>
            <person name="Krismanich A.P."/>
            <person name="Labbe G."/>
            <person name="Goodfellow V.J."/>
            <person name="Marrone L."/>
            <person name="Desoky A.Y."/>
            <person name="Calvopina K."/>
            <person name="Whittle E.E."/>
            <person name="Zeng F."/>
            <person name="Avison M.B."/>
            <person name="Bols N.C."/>
            <person name="Siemann S."/>
            <person name="Spencer J."/>
            <person name="Dmitrienko G.I."/>
        </authorList>
    </citation>
    <scope>X-RAY CRYSTALLOGRAPHY (2.00 ANGSTROMS) OF 19-246 IN COMPLEX WITH ZN(2+)</scope>
    <scope>FUNCTION</scope>
    <scope>ACTIVITY REGULATION</scope>
</reference>
<reference evidence="23 24" key="11">
    <citation type="journal article" date="2019" name="Antimicrob. Agents Chemother.">
        <title>4-Amino-2-Sulfanylbenzoic Acid as a Potent Subclass B3 Metallo-beta-Lactamase-Specific Inhibitor Applicable for Distinguishing Metallo-beta-Lactamase Subclasses.</title>
        <authorList>
            <person name="Wachino J.I."/>
            <person name="Kanechi R."/>
            <person name="Nishino E."/>
            <person name="Mochizuki M."/>
            <person name="Jin W."/>
            <person name="Kimura K."/>
            <person name="Kurosaki H."/>
            <person name="Arakawa Y."/>
        </authorList>
    </citation>
    <scope>X-RAY CRYSTALLOGRAPHY (1.57 ANGSTROMS) OF 19-246 IN APO FORM IN COMPLEX WITH ZN(2+) AND WITH INHIBITOR</scope>
    <scope>ACTIVITY REGULATION</scope>
</reference>
<sequence length="246" mass="27120">MSKLSVFFIFLFCSIATAAESLPDLKIEKLDEGVYVHTSFEEVNGWGVVPKHGLVVLVNAEAYLIDTPFTAKDTEKLVTWFVERGYKIKGSISSHFHSDSTGGIEWLNSRSIPTYASELTNELLKKDGKVQATNSFSGVNYWLVKNKIEVFYPGPGHTPDNVVVWLPERKILFGGCFIKPYGLGNLGDANIEAWPKSAKLLKSKYGKAKLVVPSHSEVGDASLLKLTLEQAVKGLNESKKPSKPSN</sequence>
<accession>P52699</accession>
<dbReference type="EC" id="3.1.26.-" evidence="11"/>
<dbReference type="EC" id="3.5.2.6" evidence="2 4 5 12"/>
<dbReference type="EMBL" id="S71932">
    <property type="protein sequence ID" value="AAB30289.1"/>
    <property type="molecule type" value="Genomic_DNA"/>
</dbReference>
<dbReference type="EMBL" id="D50438">
    <property type="protein sequence ID" value="BAA08930.1"/>
    <property type="molecule type" value="Genomic_DNA"/>
</dbReference>
<dbReference type="RefSeq" id="WP_003159548.1">
    <property type="nucleotide sequence ID" value="NG_049172.1"/>
</dbReference>
<dbReference type="PDB" id="1DD6">
    <property type="method" value="X-ray"/>
    <property type="resolution" value="2.00 A"/>
    <property type="chains" value="A/B=19-246"/>
</dbReference>
<dbReference type="PDB" id="1VGN">
    <property type="method" value="X-ray"/>
    <property type="resolution" value="2.63 A"/>
    <property type="chains" value="A/B=19-246"/>
</dbReference>
<dbReference type="PDB" id="1WUO">
    <property type="method" value="X-ray"/>
    <property type="resolution" value="2.01 A"/>
    <property type="chains" value="A/B/C/D=19-246"/>
</dbReference>
<dbReference type="PDB" id="1WUP">
    <property type="method" value="X-ray"/>
    <property type="resolution" value="3.00 A"/>
    <property type="chains" value="A/B/C/D=19-246"/>
</dbReference>
<dbReference type="PDB" id="2DOO">
    <property type="method" value="X-ray"/>
    <property type="resolution" value="2.43 A"/>
    <property type="chains" value="A/B=19-246"/>
</dbReference>
<dbReference type="PDB" id="4C1F">
    <property type="method" value="X-ray"/>
    <property type="resolution" value="2.01 A"/>
    <property type="chains" value="A/B=19-246"/>
</dbReference>
<dbReference type="PDB" id="4C1G">
    <property type="method" value="X-ray"/>
    <property type="resolution" value="1.71 A"/>
    <property type="chains" value="A/B=19-246"/>
</dbReference>
<dbReference type="PDB" id="5EV6">
    <property type="method" value="X-ray"/>
    <property type="resolution" value="1.98 A"/>
    <property type="chains" value="A/B/C/D=19-246"/>
</dbReference>
<dbReference type="PDB" id="5EV8">
    <property type="method" value="X-ray"/>
    <property type="resolution" value="2.30 A"/>
    <property type="chains" value="A/B/C/D=19-246"/>
</dbReference>
<dbReference type="PDB" id="5EWA">
    <property type="method" value="X-ray"/>
    <property type="resolution" value="2.30 A"/>
    <property type="chains" value="A/B/C/D=19-246"/>
</dbReference>
<dbReference type="PDB" id="5HH4">
    <property type="method" value="X-ray"/>
    <property type="resolution" value="2.00 A"/>
    <property type="chains" value="A/B/C/D=19-246"/>
</dbReference>
<dbReference type="PDB" id="5Y5B">
    <property type="method" value="X-ray"/>
    <property type="resolution" value="1.70 A"/>
    <property type="chains" value="A=19-246"/>
</dbReference>
<dbReference type="PDB" id="6JED">
    <property type="method" value="X-ray"/>
    <property type="resolution" value="1.57 A"/>
    <property type="chains" value="A=19-246"/>
</dbReference>
<dbReference type="PDB" id="6JKA">
    <property type="method" value="X-ray"/>
    <property type="resolution" value="2.01 A"/>
    <property type="chains" value="A/B/C/D=20-242"/>
</dbReference>
<dbReference type="PDB" id="6LBL">
    <property type="method" value="X-ray"/>
    <property type="resolution" value="1.68 A"/>
    <property type="chains" value="A=19-246"/>
</dbReference>
<dbReference type="PDB" id="6ZYR">
    <property type="method" value="X-ray"/>
    <property type="resolution" value="1.87 A"/>
    <property type="chains" value="A/B/C/D=19-246"/>
</dbReference>
<dbReference type="PDB" id="6ZYS">
    <property type="method" value="X-ray"/>
    <property type="resolution" value="1.87 A"/>
    <property type="chains" value="A/B/C/D=19-246"/>
</dbReference>
<dbReference type="PDB" id="7DTM">
    <property type="method" value="X-ray"/>
    <property type="resolution" value="2.00 A"/>
    <property type="chains" value="A/B/C/D=19-246"/>
</dbReference>
<dbReference type="PDB" id="7DTN">
    <property type="method" value="X-ray"/>
    <property type="resolution" value="1.85 A"/>
    <property type="chains" value="A/B/C/D=19-246"/>
</dbReference>
<dbReference type="PDB" id="8Z5L">
    <property type="method" value="X-ray"/>
    <property type="resolution" value="2.65 A"/>
    <property type="chains" value="A/B/C/D=20-246"/>
</dbReference>
<dbReference type="PDBsum" id="1DD6"/>
<dbReference type="PDBsum" id="1VGN"/>
<dbReference type="PDBsum" id="1WUO"/>
<dbReference type="PDBsum" id="1WUP"/>
<dbReference type="PDBsum" id="2DOO"/>
<dbReference type="PDBsum" id="4C1F"/>
<dbReference type="PDBsum" id="4C1G"/>
<dbReference type="PDBsum" id="5EV6"/>
<dbReference type="PDBsum" id="5EV8"/>
<dbReference type="PDBsum" id="5EWA"/>
<dbReference type="PDBsum" id="5HH4"/>
<dbReference type="PDBsum" id="5Y5B"/>
<dbReference type="PDBsum" id="6JED"/>
<dbReference type="PDBsum" id="6JKA"/>
<dbReference type="PDBsum" id="6LBL"/>
<dbReference type="PDBsum" id="6ZYR"/>
<dbReference type="PDBsum" id="6ZYS"/>
<dbReference type="PDBsum" id="7DTM"/>
<dbReference type="PDBsum" id="7DTN"/>
<dbReference type="PDBsum" id="8Z5L"/>
<dbReference type="BMRB" id="P52699"/>
<dbReference type="SMR" id="P52699"/>
<dbReference type="BindingDB" id="P52699"/>
<dbReference type="ChEMBL" id="CHEMBL4105964"/>
<dbReference type="DrugBank" id="DB02154">
    <property type="generic name" value="2,3-Bis-Benzo[1,3]Dioxol-5-Ylmethyl-Succinic Acid"/>
</dbReference>
<dbReference type="DrugBank" id="DB04749">
    <property type="generic name" value="2-(3-OXO-PROPYLSULFANYLCARBONYL)-ETHANETHIOLATE"/>
</dbReference>
<dbReference type="DrugBank" id="DB02450">
    <property type="generic name" value="2-Benzo[1,3]Dioxol-5-Ylmethyl-3-Benzyl-Succinic Acid"/>
</dbReference>
<dbReference type="DrugBank" id="DB02706">
    <property type="generic name" value="Mercaptocarboxylate Inhibitor"/>
</dbReference>
<dbReference type="DrugBank" id="DB07526">
    <property type="generic name" value="N-[4-({[5-(DIMETHYLAMINO)-1-NAPHTHYL]SULFONYL}AMINO)BUTYL]-3-SULFANYLPROPANAMIDE"/>
</dbReference>
<dbReference type="CARD" id="ARO:3002192">
    <property type="molecule name" value="IMP-1"/>
    <property type="mechanism identifier" value="ARO:0001004"/>
    <property type="mechanism name" value="antibiotic inactivation"/>
</dbReference>
<dbReference type="GeneID" id="69562815"/>
<dbReference type="KEGG" id="ag:AAB30289"/>
<dbReference type="BRENDA" id="3.5.2.6">
    <property type="organism ID" value="5690"/>
</dbReference>
<dbReference type="SABIO-RK" id="P52699"/>
<dbReference type="EvolutionaryTrace" id="P52699"/>
<dbReference type="GO" id="GO:0042597">
    <property type="term" value="C:periplasmic space"/>
    <property type="evidence" value="ECO:0007669"/>
    <property type="project" value="UniProtKB-SubCell"/>
</dbReference>
<dbReference type="GO" id="GO:0008800">
    <property type="term" value="F:beta-lactamase activity"/>
    <property type="evidence" value="ECO:0000314"/>
    <property type="project" value="UniProtKB"/>
</dbReference>
<dbReference type="GO" id="GO:0008270">
    <property type="term" value="F:zinc ion binding"/>
    <property type="evidence" value="ECO:0000314"/>
    <property type="project" value="UniProtKB"/>
</dbReference>
<dbReference type="GO" id="GO:0017001">
    <property type="term" value="P:antibiotic catabolic process"/>
    <property type="evidence" value="ECO:0000314"/>
    <property type="project" value="UniProtKB"/>
</dbReference>
<dbReference type="GO" id="GO:0046677">
    <property type="term" value="P:response to antibiotic"/>
    <property type="evidence" value="ECO:0007669"/>
    <property type="project" value="UniProtKB-KW"/>
</dbReference>
<dbReference type="CDD" id="cd16301">
    <property type="entry name" value="IMP_DIM-like_MBL-B1"/>
    <property type="match status" value="1"/>
</dbReference>
<dbReference type="Gene3D" id="3.60.15.10">
    <property type="entry name" value="Ribonuclease Z/Hydroxyacylglutathione hydrolase-like"/>
    <property type="match status" value="1"/>
</dbReference>
<dbReference type="InterPro" id="IPR001018">
    <property type="entry name" value="Beta-lactamase_class-B_CS"/>
</dbReference>
<dbReference type="InterPro" id="IPR001279">
    <property type="entry name" value="Metallo-B-lactamas"/>
</dbReference>
<dbReference type="InterPro" id="IPR050855">
    <property type="entry name" value="NDM-1-like"/>
</dbReference>
<dbReference type="InterPro" id="IPR036866">
    <property type="entry name" value="RibonucZ/Hydroxyglut_hydro"/>
</dbReference>
<dbReference type="NCBIfam" id="NF012229">
    <property type="entry name" value="bla_class_B_core"/>
    <property type="match status" value="1"/>
</dbReference>
<dbReference type="NCBIfam" id="NF033088">
    <property type="entry name" value="bla_subclass_B1"/>
    <property type="match status" value="1"/>
</dbReference>
<dbReference type="NCBIfam" id="NF012145">
    <property type="entry name" value="blaDIM_SIM_IMP"/>
    <property type="match status" value="1"/>
</dbReference>
<dbReference type="NCBIfam" id="NF012147">
    <property type="entry name" value="blaIMP"/>
    <property type="match status" value="1"/>
</dbReference>
<dbReference type="PANTHER" id="PTHR42951:SF4">
    <property type="entry name" value="ACYL-COENZYME A THIOESTERASE MBLAC2"/>
    <property type="match status" value="1"/>
</dbReference>
<dbReference type="PANTHER" id="PTHR42951">
    <property type="entry name" value="METALLO-BETA-LACTAMASE DOMAIN-CONTAINING"/>
    <property type="match status" value="1"/>
</dbReference>
<dbReference type="Pfam" id="PF00753">
    <property type="entry name" value="Lactamase_B"/>
    <property type="match status" value="1"/>
</dbReference>
<dbReference type="SMART" id="SM00849">
    <property type="entry name" value="Lactamase_B"/>
    <property type="match status" value="1"/>
</dbReference>
<dbReference type="SUPFAM" id="SSF56281">
    <property type="entry name" value="Metallo-hydrolase/oxidoreductase"/>
    <property type="match status" value="1"/>
</dbReference>
<dbReference type="PROSITE" id="PS00743">
    <property type="entry name" value="BETA_LACTAMASE_B_1"/>
    <property type="match status" value="1"/>
</dbReference>
<dbReference type="PROSITE" id="PS00744">
    <property type="entry name" value="BETA_LACTAMASE_B_2"/>
    <property type="match status" value="1"/>
</dbReference>
<name>BLBI1_SERMA</name>
<feature type="signal peptide" evidence="12">
    <location>
        <begin position="1"/>
        <end position="18"/>
    </location>
</feature>
<feature type="chain" id="PRO_0000016946" description="Metallo-beta-lactamase IMP-1">
    <location>
        <begin position="19"/>
        <end position="246"/>
    </location>
</feature>
<feature type="binding site" evidence="7">
    <location>
        <position position="95"/>
    </location>
    <ligand>
        <name>Zn(2+)</name>
        <dbReference type="ChEBI" id="CHEBI:29105"/>
        <label>1</label>
    </ligand>
</feature>
<feature type="binding site" evidence="7">
    <location>
        <position position="97"/>
    </location>
    <ligand>
        <name>Zn(2+)</name>
        <dbReference type="ChEBI" id="CHEBI:29105"/>
        <label>1</label>
    </ligand>
</feature>
<feature type="binding site" evidence="7">
    <location>
        <position position="99"/>
    </location>
    <ligand>
        <name>Zn(2+)</name>
        <dbReference type="ChEBI" id="CHEBI:29105"/>
        <label>2</label>
    </ligand>
</feature>
<feature type="binding site" evidence="7">
    <location>
        <position position="157"/>
    </location>
    <ligand>
        <name>Zn(2+)</name>
        <dbReference type="ChEBI" id="CHEBI:29105"/>
        <label>1</label>
    </ligand>
</feature>
<feature type="binding site" evidence="7">
    <location>
        <position position="176"/>
    </location>
    <ligand>
        <name>Zn(2+)</name>
        <dbReference type="ChEBI" id="CHEBI:29105"/>
        <label>2</label>
    </ligand>
</feature>
<feature type="binding site" evidence="7">
    <location>
        <position position="179"/>
    </location>
    <ligand>
        <name>a beta-lactam</name>
        <dbReference type="ChEBI" id="CHEBI:35627"/>
    </ligand>
</feature>
<feature type="binding site" evidence="1">
    <location>
        <position position="185"/>
    </location>
    <ligand>
        <name>a beta-lactam</name>
        <dbReference type="ChEBI" id="CHEBI:35627"/>
    </ligand>
</feature>
<feature type="binding site" evidence="7">
    <location>
        <position position="215"/>
    </location>
    <ligand>
        <name>Zn(2+)</name>
        <dbReference type="ChEBI" id="CHEBI:29105"/>
        <label>2</label>
    </ligand>
</feature>
<feature type="mutagenesis site" description="Almost abolishes catalytic activity against cephaloridine and imipenem; drastically reduces catalytic activity against nitrocefin and benzylpenicillin. Only one Zn(II) ion is retained in the active site, in vitro." evidence="4">
    <original>D</original>
    <variation>A</variation>
    <location>
        <position position="99"/>
    </location>
</feature>
<feature type="mutagenesis site" description="Drastically reduces catalytic activity against cephaloridine, imipenem, nitrocefin and benzylpenicillin. Despite mutation, two Zn(II) ions are retained in the active site, in vitro." evidence="4">
    <original>D</original>
    <variation>E</variation>
    <location>
        <position position="99"/>
    </location>
</feature>
<feature type="mutagenesis site" description="No effect on catalytic activity against ampicillin, various cephalosporins, or imipenem. No effect on resistance to ampicillin, aztreonam, various cephalosporins, or imipenem, in JM83 E.coli strain." evidence="2">
    <original>E</original>
    <variation>G</variation>
    <location>
        <position position="105"/>
    </location>
</feature>
<feature type="mutagenesis site" description="Reduces catalytic activity about 40-fold against imipenem, ampicillin and benzylpenicillin. Reduces catalytic activity about 10-fold against ceftazidime and cephaloridine. Modest (2-fold) increase in resistance to various cephalosporins in JM83 E.coli strain, but modest (about 2- to 8-fold) reduction in resistance to ampicillin and imipenem." evidence="2">
    <original>S</original>
    <variation>G</variation>
    <location>
        <position position="214"/>
    </location>
</feature>
<feature type="strand" evidence="25">
    <location>
        <begin position="26"/>
        <end position="31"/>
    </location>
</feature>
<feature type="strand" evidence="25">
    <location>
        <begin position="34"/>
        <end position="43"/>
    </location>
</feature>
<feature type="turn" evidence="25">
    <location>
        <begin position="44"/>
        <end position="46"/>
    </location>
</feature>
<feature type="strand" evidence="25">
    <location>
        <begin position="47"/>
        <end position="58"/>
    </location>
</feature>
<feature type="strand" evidence="25">
    <location>
        <begin position="61"/>
        <end position="66"/>
    </location>
</feature>
<feature type="helix" evidence="25">
    <location>
        <begin position="71"/>
        <end position="83"/>
    </location>
</feature>
<feature type="strand" evidence="25">
    <location>
        <begin position="87"/>
        <end position="92"/>
    </location>
</feature>
<feature type="strand" evidence="25">
    <location>
        <begin position="94"/>
        <end position="97"/>
    </location>
</feature>
<feature type="helix" evidence="25">
    <location>
        <begin position="98"/>
        <end position="101"/>
    </location>
</feature>
<feature type="helix" evidence="25">
    <location>
        <begin position="104"/>
        <end position="109"/>
    </location>
</feature>
<feature type="strand" evidence="25">
    <location>
        <begin position="114"/>
        <end position="117"/>
    </location>
</feature>
<feature type="helix" evidence="25">
    <location>
        <begin position="118"/>
        <end position="126"/>
    </location>
</feature>
<feature type="strand" evidence="25">
    <location>
        <begin position="133"/>
        <end position="136"/>
    </location>
</feature>
<feature type="strand" evidence="25">
    <location>
        <begin position="138"/>
        <end position="144"/>
    </location>
</feature>
<feature type="turn" evidence="25">
    <location>
        <begin position="145"/>
        <end position="147"/>
    </location>
</feature>
<feature type="strand" evidence="25">
    <location>
        <begin position="148"/>
        <end position="151"/>
    </location>
</feature>
<feature type="strand" evidence="25">
    <location>
        <begin position="155"/>
        <end position="158"/>
    </location>
</feature>
<feature type="strand" evidence="25">
    <location>
        <begin position="163"/>
        <end position="166"/>
    </location>
</feature>
<feature type="turn" evidence="25">
    <location>
        <begin position="167"/>
        <end position="170"/>
    </location>
</feature>
<feature type="strand" evidence="25">
    <location>
        <begin position="171"/>
        <end position="175"/>
    </location>
</feature>
<feature type="turn" evidence="25">
    <location>
        <begin position="191"/>
        <end position="193"/>
    </location>
</feature>
<feature type="helix" evidence="25">
    <location>
        <begin position="194"/>
        <end position="204"/>
    </location>
</feature>
<feature type="strand" evidence="25">
    <location>
        <begin position="209"/>
        <end position="216"/>
    </location>
</feature>
<feature type="helix" evidence="25">
    <location>
        <begin position="222"/>
        <end position="238"/>
    </location>
</feature>
<evidence type="ECO:0000250" key="1">
    <source>
        <dbReference type="UniProtKB" id="P25910"/>
    </source>
</evidence>
<evidence type="ECO:0000269" key="2">
    <source>
    </source>
</evidence>
<evidence type="ECO:0000269" key="3">
    <source>
    </source>
</evidence>
<evidence type="ECO:0000269" key="4">
    <source>
    </source>
</evidence>
<evidence type="ECO:0000269" key="5">
    <source>
    </source>
</evidence>
<evidence type="ECO:0000269" key="6">
    <source>
    </source>
</evidence>
<evidence type="ECO:0000269" key="7">
    <source>
    </source>
</evidence>
<evidence type="ECO:0000269" key="8">
    <source>
    </source>
</evidence>
<evidence type="ECO:0000269" key="9">
    <source>
    </source>
</evidence>
<evidence type="ECO:0000269" key="10">
    <source>
    </source>
</evidence>
<evidence type="ECO:0000269" key="11">
    <source>
    </source>
</evidence>
<evidence type="ECO:0000269" key="12">
    <source>
    </source>
</evidence>
<evidence type="ECO:0000303" key="13">
    <source>
    </source>
</evidence>
<evidence type="ECO:0000305" key="14"/>
<evidence type="ECO:0007744" key="15">
    <source>
        <dbReference type="PDB" id="1VGN"/>
    </source>
</evidence>
<evidence type="ECO:0007744" key="16">
    <source>
        <dbReference type="PDB" id="1WUO"/>
    </source>
</evidence>
<evidence type="ECO:0007744" key="17">
    <source>
        <dbReference type="PDB" id="1WUP"/>
    </source>
</evidence>
<evidence type="ECO:0007744" key="18">
    <source>
        <dbReference type="PDB" id="2DOO"/>
    </source>
</evidence>
<evidence type="ECO:0007744" key="19">
    <source>
        <dbReference type="PDB" id="5EV6"/>
    </source>
</evidence>
<evidence type="ECO:0007744" key="20">
    <source>
        <dbReference type="PDB" id="5EV8"/>
    </source>
</evidence>
<evidence type="ECO:0007744" key="21">
    <source>
        <dbReference type="PDB" id="5EWA"/>
    </source>
</evidence>
<evidence type="ECO:0007744" key="22">
    <source>
        <dbReference type="PDB" id="5HH4"/>
    </source>
</evidence>
<evidence type="ECO:0007744" key="23">
    <source>
        <dbReference type="PDB" id="5Y5B"/>
    </source>
</evidence>
<evidence type="ECO:0007744" key="24">
    <source>
        <dbReference type="PDB" id="6JED"/>
    </source>
</evidence>
<evidence type="ECO:0007829" key="25">
    <source>
        <dbReference type="PDB" id="6JED"/>
    </source>
</evidence>
<organism>
    <name type="scientific">Serratia marcescens</name>
    <dbReference type="NCBI Taxonomy" id="615"/>
    <lineage>
        <taxon>Bacteria</taxon>
        <taxon>Pseudomonadati</taxon>
        <taxon>Pseudomonadota</taxon>
        <taxon>Gammaproteobacteria</taxon>
        <taxon>Enterobacterales</taxon>
        <taxon>Yersiniaceae</taxon>
        <taxon>Serratia</taxon>
    </lineage>
</organism>
<proteinExistence type="evidence at protein level"/>